<comment type="function">
    <text evidence="1">Destroys superoxide anion radicals which are normally produced within the cells and which are toxic to biological systems.</text>
</comment>
<comment type="catalytic activity">
    <reaction>
        <text>2 superoxide + 2 H(+) = H2O2 + O2</text>
        <dbReference type="Rhea" id="RHEA:20696"/>
        <dbReference type="ChEBI" id="CHEBI:15378"/>
        <dbReference type="ChEBI" id="CHEBI:15379"/>
        <dbReference type="ChEBI" id="CHEBI:16240"/>
        <dbReference type="ChEBI" id="CHEBI:18421"/>
        <dbReference type="EC" id="1.15.1.1"/>
    </reaction>
</comment>
<comment type="cofactor">
    <cofactor evidence="1">
        <name>Fe cation</name>
        <dbReference type="ChEBI" id="CHEBI:24875"/>
    </cofactor>
    <text evidence="1">Binds 1 Fe cation per subunit.</text>
</comment>
<comment type="subunit">
    <text evidence="1">Homodimer.</text>
</comment>
<comment type="similarity">
    <text evidence="2">Belongs to the iron/manganese superoxide dismutase family.</text>
</comment>
<organism>
    <name type="scientific">Shigella flexneri</name>
    <dbReference type="NCBI Taxonomy" id="623"/>
    <lineage>
        <taxon>Bacteria</taxon>
        <taxon>Pseudomonadati</taxon>
        <taxon>Pseudomonadota</taxon>
        <taxon>Gammaproteobacteria</taxon>
        <taxon>Enterobacterales</taxon>
        <taxon>Enterobacteriaceae</taxon>
        <taxon>Shigella</taxon>
    </lineage>
</organism>
<reference key="1">
    <citation type="journal article" date="2002" name="Nucleic Acids Res.">
        <title>Genome sequence of Shigella flexneri 2a: insights into pathogenicity through comparison with genomes of Escherichia coli K12 and O157.</title>
        <authorList>
            <person name="Jin Q."/>
            <person name="Yuan Z."/>
            <person name="Xu J."/>
            <person name="Wang Y."/>
            <person name="Shen Y."/>
            <person name="Lu W."/>
            <person name="Wang J."/>
            <person name="Liu H."/>
            <person name="Yang J."/>
            <person name="Yang F."/>
            <person name="Zhang X."/>
            <person name="Zhang J."/>
            <person name="Yang G."/>
            <person name="Wu H."/>
            <person name="Qu D."/>
            <person name="Dong J."/>
            <person name="Sun L."/>
            <person name="Xue Y."/>
            <person name="Zhao A."/>
            <person name="Gao Y."/>
            <person name="Zhu J."/>
            <person name="Kan B."/>
            <person name="Ding K."/>
            <person name="Chen S."/>
            <person name="Cheng H."/>
            <person name="Yao Z."/>
            <person name="He B."/>
            <person name="Chen R."/>
            <person name="Ma D."/>
            <person name="Qiang B."/>
            <person name="Wen Y."/>
            <person name="Hou Y."/>
            <person name="Yu J."/>
        </authorList>
    </citation>
    <scope>NUCLEOTIDE SEQUENCE [LARGE SCALE GENOMIC DNA]</scope>
    <source>
        <strain>301 / Serotype 2a</strain>
    </source>
</reference>
<reference key="2">
    <citation type="journal article" date="2003" name="Infect. Immun.">
        <title>Complete genome sequence and comparative genomics of Shigella flexneri serotype 2a strain 2457T.</title>
        <authorList>
            <person name="Wei J."/>
            <person name="Goldberg M.B."/>
            <person name="Burland V."/>
            <person name="Venkatesan M.M."/>
            <person name="Deng W."/>
            <person name="Fournier G."/>
            <person name="Mayhew G.F."/>
            <person name="Plunkett G. III"/>
            <person name="Rose D.J."/>
            <person name="Darling A."/>
            <person name="Mau B."/>
            <person name="Perna N.T."/>
            <person name="Payne S.M."/>
            <person name="Runyen-Janecky L.J."/>
            <person name="Zhou S."/>
            <person name="Schwartz D.C."/>
            <person name="Blattner F.R."/>
        </authorList>
    </citation>
    <scope>NUCLEOTIDE SEQUENCE [LARGE SCALE GENOMIC DNA]</scope>
    <source>
        <strain>ATCC 700930 / 2457T / Serotype 2a</strain>
    </source>
</reference>
<protein>
    <recommendedName>
        <fullName>Superoxide dismutase [Fe]</fullName>
        <ecNumber>1.15.1.1</ecNumber>
    </recommendedName>
</protein>
<feature type="initiator methionine" description="Removed" evidence="1">
    <location>
        <position position="1"/>
    </location>
</feature>
<feature type="chain" id="PRO_0000159984" description="Superoxide dismutase [Fe]">
    <location>
        <begin position="2"/>
        <end position="193"/>
    </location>
</feature>
<feature type="binding site" evidence="1">
    <location>
        <position position="27"/>
    </location>
    <ligand>
        <name>Fe cation</name>
        <dbReference type="ChEBI" id="CHEBI:24875"/>
    </ligand>
</feature>
<feature type="binding site" evidence="1">
    <location>
        <position position="74"/>
    </location>
    <ligand>
        <name>Fe cation</name>
        <dbReference type="ChEBI" id="CHEBI:24875"/>
    </ligand>
</feature>
<feature type="binding site" evidence="1">
    <location>
        <position position="157"/>
    </location>
    <ligand>
        <name>Fe cation</name>
        <dbReference type="ChEBI" id="CHEBI:24875"/>
    </ligand>
</feature>
<feature type="binding site" evidence="1">
    <location>
        <position position="161"/>
    </location>
    <ligand>
        <name>Fe cation</name>
        <dbReference type="ChEBI" id="CHEBI:24875"/>
    </ligand>
</feature>
<feature type="modified residue" description="N6-acetyllysine" evidence="1">
    <location>
        <position position="51"/>
    </location>
</feature>
<proteinExistence type="inferred from homology"/>
<name>SODF_SHIFL</name>
<accession>P0AGD6</accession>
<accession>P09157</accession>
<keyword id="KW-0007">Acetylation</keyword>
<keyword id="KW-0408">Iron</keyword>
<keyword id="KW-0479">Metal-binding</keyword>
<keyword id="KW-0560">Oxidoreductase</keyword>
<keyword id="KW-1185">Reference proteome</keyword>
<evidence type="ECO:0000250" key="1"/>
<evidence type="ECO:0000305" key="2"/>
<gene>
    <name type="primary">sodB</name>
    <name type="ordered locus">SF1684</name>
    <name type="ordered locus">S1816</name>
</gene>
<dbReference type="EC" id="1.15.1.1"/>
<dbReference type="EMBL" id="AE005674">
    <property type="protein sequence ID" value="AAN43263.1"/>
    <property type="molecule type" value="Genomic_DNA"/>
</dbReference>
<dbReference type="EMBL" id="AE014073">
    <property type="protein sequence ID" value="AAP17152.1"/>
    <property type="molecule type" value="Genomic_DNA"/>
</dbReference>
<dbReference type="RefSeq" id="NP_707556.1">
    <property type="nucleotide sequence ID" value="NC_004337.2"/>
</dbReference>
<dbReference type="RefSeq" id="WP_000007283.1">
    <property type="nucleotide sequence ID" value="NZ_WPGW01000025.1"/>
</dbReference>
<dbReference type="BMRB" id="P0AGD6"/>
<dbReference type="SMR" id="P0AGD6"/>
<dbReference type="STRING" id="198214.SF1684"/>
<dbReference type="PaxDb" id="198214-SF1684"/>
<dbReference type="GeneID" id="1023373"/>
<dbReference type="GeneID" id="93775810"/>
<dbReference type="KEGG" id="sfl:SF1684"/>
<dbReference type="KEGG" id="sfx:S1816"/>
<dbReference type="PATRIC" id="fig|198214.7.peg.1991"/>
<dbReference type="HOGENOM" id="CLU_031625_0_0_6"/>
<dbReference type="Proteomes" id="UP000001006">
    <property type="component" value="Chromosome"/>
</dbReference>
<dbReference type="Proteomes" id="UP000002673">
    <property type="component" value="Chromosome"/>
</dbReference>
<dbReference type="GO" id="GO:0046872">
    <property type="term" value="F:metal ion binding"/>
    <property type="evidence" value="ECO:0007669"/>
    <property type="project" value="UniProtKB-KW"/>
</dbReference>
<dbReference type="GO" id="GO:0004784">
    <property type="term" value="F:superoxide dismutase activity"/>
    <property type="evidence" value="ECO:0007669"/>
    <property type="project" value="UniProtKB-EC"/>
</dbReference>
<dbReference type="FunFam" id="1.10.287.990:FF:000002">
    <property type="entry name" value="Superoxide dismutase"/>
    <property type="match status" value="1"/>
</dbReference>
<dbReference type="FunFam" id="3.55.40.20:FF:000001">
    <property type="entry name" value="Superoxide dismutase"/>
    <property type="match status" value="1"/>
</dbReference>
<dbReference type="Gene3D" id="1.10.287.990">
    <property type="entry name" value="Fe,Mn superoxide dismutase (SOD) domain"/>
    <property type="match status" value="1"/>
</dbReference>
<dbReference type="Gene3D" id="3.55.40.20">
    <property type="entry name" value="Iron/manganese superoxide dismutase, C-terminal domain"/>
    <property type="match status" value="1"/>
</dbReference>
<dbReference type="InterPro" id="IPR001189">
    <property type="entry name" value="Mn/Fe_SOD"/>
</dbReference>
<dbReference type="InterPro" id="IPR019833">
    <property type="entry name" value="Mn/Fe_SOD_BS"/>
</dbReference>
<dbReference type="InterPro" id="IPR019832">
    <property type="entry name" value="Mn/Fe_SOD_C"/>
</dbReference>
<dbReference type="InterPro" id="IPR019831">
    <property type="entry name" value="Mn/Fe_SOD_N"/>
</dbReference>
<dbReference type="InterPro" id="IPR036324">
    <property type="entry name" value="Mn/Fe_SOD_N_sf"/>
</dbReference>
<dbReference type="InterPro" id="IPR036314">
    <property type="entry name" value="SOD_C_sf"/>
</dbReference>
<dbReference type="NCBIfam" id="NF007832">
    <property type="entry name" value="PRK10543.1"/>
    <property type="match status" value="1"/>
</dbReference>
<dbReference type="PANTHER" id="PTHR42769">
    <property type="entry name" value="SUPEROXIDE DISMUTASE"/>
    <property type="match status" value="1"/>
</dbReference>
<dbReference type="PANTHER" id="PTHR42769:SF3">
    <property type="entry name" value="SUPEROXIDE DISMUTASE [FE] 2, CHLOROPLASTIC"/>
    <property type="match status" value="1"/>
</dbReference>
<dbReference type="Pfam" id="PF02777">
    <property type="entry name" value="Sod_Fe_C"/>
    <property type="match status" value="1"/>
</dbReference>
<dbReference type="Pfam" id="PF00081">
    <property type="entry name" value="Sod_Fe_N"/>
    <property type="match status" value="1"/>
</dbReference>
<dbReference type="PIRSF" id="PIRSF000349">
    <property type="entry name" value="SODismutase"/>
    <property type="match status" value="1"/>
</dbReference>
<dbReference type="PRINTS" id="PR01703">
    <property type="entry name" value="MNSODISMTASE"/>
</dbReference>
<dbReference type="SUPFAM" id="SSF54719">
    <property type="entry name" value="Fe,Mn superoxide dismutase (SOD), C-terminal domain"/>
    <property type="match status" value="1"/>
</dbReference>
<dbReference type="SUPFAM" id="SSF46609">
    <property type="entry name" value="Fe,Mn superoxide dismutase (SOD), N-terminal domain"/>
    <property type="match status" value="1"/>
</dbReference>
<dbReference type="PROSITE" id="PS00088">
    <property type="entry name" value="SOD_MN"/>
    <property type="match status" value="1"/>
</dbReference>
<sequence length="193" mass="21266">MSFELPALPYAKDALAPHISAETIEYHYGKHHQTYVTNLNNLIKGTAFEGKSLEEIIRSSEGGVFNNAAQVWNHTFYWNCLAPNAGGEPTGKVAEAIAASFGSFADFKAQFTDAAIKNFGSGWTWLVKNSDGKLAIVSTSNAGTPLTTDATPLLTVDVWEHAYYIDYRNARPGYLEHFWALVNWEFVAKNLAA</sequence>